<dbReference type="EC" id="2.7.7.49"/>
<dbReference type="EMBL" id="AF060230">
    <property type="protein sequence ID" value="AAC39163.1"/>
    <property type="molecule type" value="Genomic_DNA"/>
</dbReference>
<dbReference type="PIR" id="T31107">
    <property type="entry name" value="T31107"/>
</dbReference>
<dbReference type="SMR" id="O76332"/>
<dbReference type="GO" id="GO:0000781">
    <property type="term" value="C:chromosome, telomeric region"/>
    <property type="evidence" value="ECO:0007669"/>
    <property type="project" value="UniProtKB-SubCell"/>
</dbReference>
<dbReference type="GO" id="GO:0000333">
    <property type="term" value="C:telomerase catalytic core complex"/>
    <property type="evidence" value="ECO:0007669"/>
    <property type="project" value="TreeGrafter"/>
</dbReference>
<dbReference type="GO" id="GO:0046872">
    <property type="term" value="F:metal ion binding"/>
    <property type="evidence" value="ECO:0007669"/>
    <property type="project" value="UniProtKB-KW"/>
</dbReference>
<dbReference type="GO" id="GO:0003720">
    <property type="term" value="F:telomerase activity"/>
    <property type="evidence" value="ECO:0007669"/>
    <property type="project" value="InterPro"/>
</dbReference>
<dbReference type="GO" id="GO:0070034">
    <property type="term" value="F:telomerase RNA binding"/>
    <property type="evidence" value="ECO:0007669"/>
    <property type="project" value="TreeGrafter"/>
</dbReference>
<dbReference type="GO" id="GO:0042162">
    <property type="term" value="F:telomeric DNA binding"/>
    <property type="evidence" value="ECO:0007669"/>
    <property type="project" value="TreeGrafter"/>
</dbReference>
<dbReference type="GO" id="GO:0007004">
    <property type="term" value="P:telomere maintenance via telomerase"/>
    <property type="evidence" value="ECO:0007669"/>
    <property type="project" value="TreeGrafter"/>
</dbReference>
<dbReference type="CDD" id="cd01648">
    <property type="entry name" value="TERT"/>
    <property type="match status" value="1"/>
</dbReference>
<dbReference type="Gene3D" id="1.10.132.70">
    <property type="match status" value="1"/>
</dbReference>
<dbReference type="Gene3D" id="1.10.10.1970">
    <property type="entry name" value="TERT catalytic subunit-like"/>
    <property type="match status" value="1"/>
</dbReference>
<dbReference type="InterPro" id="IPR000477">
    <property type="entry name" value="RT_dom"/>
</dbReference>
<dbReference type="InterPro" id="IPR021891">
    <property type="entry name" value="Telomerase_RBD"/>
</dbReference>
<dbReference type="InterPro" id="IPR003545">
    <property type="entry name" value="Telomerase_RT"/>
</dbReference>
<dbReference type="PANTHER" id="PTHR12066">
    <property type="entry name" value="TELOMERASE REVERSE TRANSCRIPTASE"/>
    <property type="match status" value="1"/>
</dbReference>
<dbReference type="PANTHER" id="PTHR12066:SF0">
    <property type="entry name" value="TELOMERASE REVERSE TRANSCRIPTASE"/>
    <property type="match status" value="1"/>
</dbReference>
<dbReference type="Pfam" id="PF12009">
    <property type="entry name" value="Telomerase_RBD"/>
    <property type="match status" value="1"/>
</dbReference>
<dbReference type="PRINTS" id="PR01365">
    <property type="entry name" value="TELOMERASERT"/>
</dbReference>
<dbReference type="SMART" id="SM00975">
    <property type="entry name" value="Telomerase_RBD"/>
    <property type="match status" value="1"/>
</dbReference>
<dbReference type="PROSITE" id="PS50878">
    <property type="entry name" value="RT_POL"/>
    <property type="match status" value="1"/>
</dbReference>
<protein>
    <recommendedName>
        <fullName>Telomerase reverse transcriptase</fullName>
        <ecNumber>2.7.7.49</ecNumber>
    </recommendedName>
    <alternativeName>
        <fullName>Telomerase catalytic subunit</fullName>
    </alternativeName>
    <alternativeName>
        <fullName>Telomerase subunit P133</fullName>
    </alternativeName>
</protein>
<gene>
    <name type="primary">TERT</name>
</gene>
<reference key="1">
    <citation type="journal article" date="1998" name="Proc. Natl. Acad. Sci. U.S.A.">
        <title>Telomerase reverse transcriptase genes identified in Tetrahymena thermophila and Oxytricha trifallax.</title>
        <authorList>
            <person name="Bryan T.M."/>
            <person name="Sperger J.M."/>
            <person name="Chapman K.B."/>
            <person name="Cech T.R."/>
        </authorList>
    </citation>
    <scope>NUCLEOTIDE SEQUENCE [GENOMIC DNA]</scope>
</reference>
<keyword id="KW-0158">Chromosome</keyword>
<keyword id="KW-0238">DNA-binding</keyword>
<keyword id="KW-0460">Magnesium</keyword>
<keyword id="KW-0479">Metal-binding</keyword>
<keyword id="KW-0548">Nucleotidyltransferase</keyword>
<keyword id="KW-0539">Nucleus</keyword>
<keyword id="KW-0695">RNA-directed DNA polymerase</keyword>
<keyword id="KW-0779">Telomere</keyword>
<keyword id="KW-0808">Transferase</keyword>
<organism>
    <name type="scientific">Oxytricha trifallax</name>
    <name type="common">Sterkiella histriomuscorum</name>
    <dbReference type="NCBI Taxonomy" id="94289"/>
    <lineage>
        <taxon>Eukaryota</taxon>
        <taxon>Sar</taxon>
        <taxon>Alveolata</taxon>
        <taxon>Ciliophora</taxon>
        <taxon>Intramacronucleata</taxon>
        <taxon>Spirotrichea</taxon>
        <taxon>Stichotrichia</taxon>
        <taxon>Sporadotrichida</taxon>
        <taxon>Oxytrichidae</taxon>
        <taxon>Stylonychinae</taxon>
        <taxon>Sterkiella</taxon>
    </lineage>
</organism>
<evidence type="ECO:0000250" key="1"/>
<evidence type="ECO:0000255" key="2">
    <source>
        <dbReference type="PROSITE-ProRule" id="PRU00405"/>
    </source>
</evidence>
<evidence type="ECO:0000256" key="3">
    <source>
        <dbReference type="SAM" id="MobiDB-lite"/>
    </source>
</evidence>
<evidence type="ECO:0000305" key="4"/>
<name>TERT_OXYTR</name>
<proteinExistence type="inferred from homology"/>
<feature type="chain" id="PRO_0000054928" description="Telomerase reverse transcriptase">
    <location>
        <begin position="1"/>
        <end position="1132"/>
    </location>
</feature>
<feature type="domain" description="Reverse transcriptase" evidence="2">
    <location>
        <begin position="602"/>
        <end position="956"/>
    </location>
</feature>
<feature type="region of interest" description="Disordered" evidence="3">
    <location>
        <begin position="1"/>
        <end position="66"/>
    </location>
</feature>
<feature type="compositionally biased region" description="Polar residues" evidence="3">
    <location>
        <begin position="9"/>
        <end position="26"/>
    </location>
</feature>
<feature type="compositionally biased region" description="Polar residues" evidence="3">
    <location>
        <begin position="45"/>
        <end position="55"/>
    </location>
</feature>
<feature type="binding site" evidence="2">
    <location>
        <position position="708"/>
    </location>
    <ligand>
        <name>Mg(2+)</name>
        <dbReference type="ChEBI" id="CHEBI:18420"/>
        <note>catalytic</note>
    </ligand>
</feature>
<feature type="binding site" evidence="2">
    <location>
        <position position="886"/>
    </location>
    <ligand>
        <name>Mg(2+)</name>
        <dbReference type="ChEBI" id="CHEBI:18420"/>
        <note>catalytic</note>
    </ligand>
</feature>
<feature type="binding site" evidence="2">
    <location>
        <position position="887"/>
    </location>
    <ligand>
        <name>Mg(2+)</name>
        <dbReference type="ChEBI" id="CHEBI:18420"/>
        <note>catalytic</note>
    </ligand>
</feature>
<accession>O76332</accession>
<sequence>MSAKKPVQSKLNIGNPTIPVTSNRSTAPKPVPGQPQFVNQEKKQQSQNTTTGAFRSNQNNANSGGNGNFELDDLHLALKSCNEIGSAKTLFCFFMELQKINDKIPSKKNTELIKNDPQFQYFCHNTILCTEQSYDEKTIEKLAKLEYKLEYKNSYIDMISKVIKELLIENKLNKLQTFGYKLVNNEFGNQNHLGMMQQNQDSSHNSNFMVKCDYINLNKQCMITKNWEKVYFYLGDHLFMHIYKEYMIFLKTRDESLVQISGTNIFCYLNEKLGRLQAAFYEGPNKNAANSAAQGSNPEANDLISAEQRKINTAIVMKKTHKYNIKAADESYLTNQEKGFWDDQIKRNRLFYCAHQNRFFQKHILNSKTLSQQQIRDNIYKEVFGFNRVRAELKGKVMSIIEQVIVNQKKFDFKYYLSKNCPLPENWKNLKKSFLEDAAVSGELRGQVFRQLFEYQQDQRQISNFLTEFVANVFPKNFLEGKNKKIFNKKMLQFVKFNRFESFTKISLLNKFRVNEVSWLSFKCKDENKKFFMNENEHVFFKVLKWVFEDLAITLMRCYFYSTEKAKEYQRIFYYRKNIWNMIMRLSIDDLLKQNLKQVEKKEMRIFCESQNFAPGKLRLIPKGDTFRPIMTFNRKIPNQVGKFQSRMTTNNKLQTAHMMLKNLKSKMFKHSFGFAVFNYDDIMKRYENFVQKWKQINSPKLYFVAMDIEKCYDNVDCERVVNFLQKSDLMDKEYFILNTFVLKRKNNIIVERSNFRKLPIKQYFRYKFQKIGIDGSSYPTLFEILEDEFNDLNMKRTIIVEQEQRKKFPKNDLLQPVLKICQNNYVTFNKKQYKQMKGIPQGLCVSYILSSFYYANLEENALQFLRKESMDPEKPEINLLMRLTDDYLLMTTEKNNAMLFIEKLYQLSLGNFFKFHMKKLKTNFALNLQKIGCTNTTQDIDSINDDLFHWIGISIDIKTLNIIQNINIKKEGILCTLNVNMQTNESILWLKKKLKSFLMNNISFYFKSTINTKQFANITLSKLYIAAAEKYVACCQEFKRFHENTSLGGQNIDIKIIHIIYVVIRSFFKYLVCNVKSPVFERDDYQQFFIYSLKFFITRFKQQKNEFAGVYKILKAKEKKLEVAKIEFQIQ</sequence>
<comment type="function">
    <text evidence="1">Telomerase is a ribonucleoprotein enzyme essential for the replication of chromosome termini in most eukaryotes. It elongates telomeres. It is a reverse transcriptase that adds simple sequence repeats to chromosome ends by copying a template sequence within the RNA component of the enzyme (By similarity).</text>
</comment>
<comment type="catalytic activity">
    <reaction evidence="2">
        <text>DNA(n) + a 2'-deoxyribonucleoside 5'-triphosphate = DNA(n+1) + diphosphate</text>
        <dbReference type="Rhea" id="RHEA:22508"/>
        <dbReference type="Rhea" id="RHEA-COMP:17339"/>
        <dbReference type="Rhea" id="RHEA-COMP:17340"/>
        <dbReference type="ChEBI" id="CHEBI:33019"/>
        <dbReference type="ChEBI" id="CHEBI:61560"/>
        <dbReference type="ChEBI" id="CHEBI:173112"/>
        <dbReference type="EC" id="2.7.7.49"/>
    </reaction>
</comment>
<comment type="subcellular location">
    <subcellularLocation>
        <location>Nucleus</location>
    </subcellularLocation>
    <subcellularLocation>
        <location>Chromosome</location>
        <location>Telomere</location>
    </subcellularLocation>
</comment>
<comment type="similarity">
    <text evidence="4">Belongs to the reverse transcriptase family. Telomerase subfamily.</text>
</comment>